<evidence type="ECO:0000255" key="1">
    <source>
        <dbReference type="HAMAP-Rule" id="MF_00279"/>
    </source>
</evidence>
<accession>B1J4E3</accession>
<reference key="1">
    <citation type="submission" date="2008-02" db="EMBL/GenBank/DDBJ databases">
        <title>Complete sequence of Pseudomonas putida W619.</title>
        <authorList>
            <person name="Copeland A."/>
            <person name="Lucas S."/>
            <person name="Lapidus A."/>
            <person name="Barry K."/>
            <person name="Detter J.C."/>
            <person name="Glavina del Rio T."/>
            <person name="Dalin E."/>
            <person name="Tice H."/>
            <person name="Pitluck S."/>
            <person name="Chain P."/>
            <person name="Malfatti S."/>
            <person name="Shin M."/>
            <person name="Vergez L."/>
            <person name="Schmutz J."/>
            <person name="Larimer F."/>
            <person name="Land M."/>
            <person name="Hauser L."/>
            <person name="Kyrpides N."/>
            <person name="Kim E."/>
            <person name="Taghavi S."/>
            <person name="Vangronsveld D."/>
            <person name="van der Lelie D."/>
            <person name="Richardson P."/>
        </authorList>
    </citation>
    <scope>NUCLEOTIDE SEQUENCE [LARGE SCALE GENOMIC DNA]</scope>
    <source>
        <strain>W619</strain>
    </source>
</reference>
<comment type="function">
    <text evidence="1">Catalyzes the complicated ring closure reaction between the two acyclic compounds 1-deoxy-D-xylulose-5-phosphate (DXP) and 3-amino-2-oxopropyl phosphate (1-amino-acetone-3-phosphate or AAP) to form pyridoxine 5'-phosphate (PNP) and inorganic phosphate.</text>
</comment>
<comment type="catalytic activity">
    <reaction evidence="1">
        <text>3-amino-2-oxopropyl phosphate + 1-deoxy-D-xylulose 5-phosphate = pyridoxine 5'-phosphate + phosphate + 2 H2O + H(+)</text>
        <dbReference type="Rhea" id="RHEA:15265"/>
        <dbReference type="ChEBI" id="CHEBI:15377"/>
        <dbReference type="ChEBI" id="CHEBI:15378"/>
        <dbReference type="ChEBI" id="CHEBI:43474"/>
        <dbReference type="ChEBI" id="CHEBI:57279"/>
        <dbReference type="ChEBI" id="CHEBI:57792"/>
        <dbReference type="ChEBI" id="CHEBI:58589"/>
        <dbReference type="EC" id="2.6.99.2"/>
    </reaction>
</comment>
<comment type="pathway">
    <text evidence="1">Cofactor biosynthesis; pyridoxine 5'-phosphate biosynthesis; pyridoxine 5'-phosphate from D-erythrose 4-phosphate: step 5/5.</text>
</comment>
<comment type="subunit">
    <text evidence="1">Homooctamer; tetramer of dimers.</text>
</comment>
<comment type="subcellular location">
    <subcellularLocation>
        <location evidence="1">Cytoplasm</location>
    </subcellularLocation>
</comment>
<comment type="similarity">
    <text evidence="1">Belongs to the PNP synthase family.</text>
</comment>
<gene>
    <name evidence="1" type="primary">pdxJ</name>
    <name type="ordered locus">PputW619_1076</name>
</gene>
<feature type="chain" id="PRO_1000114823" description="Pyridoxine 5'-phosphate synthase">
    <location>
        <begin position="1"/>
        <end position="246"/>
    </location>
</feature>
<feature type="active site" description="Proton acceptor" evidence="1">
    <location>
        <position position="48"/>
    </location>
</feature>
<feature type="active site" description="Proton acceptor" evidence="1">
    <location>
        <position position="75"/>
    </location>
</feature>
<feature type="active site" description="Proton donor" evidence="1">
    <location>
        <position position="196"/>
    </location>
</feature>
<feature type="binding site" evidence="1">
    <location>
        <position position="12"/>
    </location>
    <ligand>
        <name>3-amino-2-oxopropyl phosphate</name>
        <dbReference type="ChEBI" id="CHEBI:57279"/>
    </ligand>
</feature>
<feature type="binding site" evidence="1">
    <location>
        <begin position="14"/>
        <end position="15"/>
    </location>
    <ligand>
        <name>1-deoxy-D-xylulose 5-phosphate</name>
        <dbReference type="ChEBI" id="CHEBI:57792"/>
    </ligand>
</feature>
<feature type="binding site" evidence="1">
    <location>
        <position position="23"/>
    </location>
    <ligand>
        <name>3-amino-2-oxopropyl phosphate</name>
        <dbReference type="ChEBI" id="CHEBI:57279"/>
    </ligand>
</feature>
<feature type="binding site" evidence="1">
    <location>
        <position position="50"/>
    </location>
    <ligand>
        <name>1-deoxy-D-xylulose 5-phosphate</name>
        <dbReference type="ChEBI" id="CHEBI:57792"/>
    </ligand>
</feature>
<feature type="binding site" evidence="1">
    <location>
        <position position="55"/>
    </location>
    <ligand>
        <name>1-deoxy-D-xylulose 5-phosphate</name>
        <dbReference type="ChEBI" id="CHEBI:57792"/>
    </ligand>
</feature>
<feature type="binding site" evidence="1">
    <location>
        <position position="105"/>
    </location>
    <ligand>
        <name>1-deoxy-D-xylulose 5-phosphate</name>
        <dbReference type="ChEBI" id="CHEBI:57792"/>
    </ligand>
</feature>
<feature type="binding site" evidence="1">
    <location>
        <position position="197"/>
    </location>
    <ligand>
        <name>3-amino-2-oxopropyl phosphate</name>
        <dbReference type="ChEBI" id="CHEBI:57279"/>
    </ligand>
</feature>
<feature type="binding site" evidence="1">
    <location>
        <begin position="218"/>
        <end position="219"/>
    </location>
    <ligand>
        <name>3-amino-2-oxopropyl phosphate</name>
        <dbReference type="ChEBI" id="CHEBI:57279"/>
    </ligand>
</feature>
<feature type="site" description="Transition state stabilizer" evidence="1">
    <location>
        <position position="156"/>
    </location>
</feature>
<sequence length="246" mass="26744">MTHSNRMLLGVNIDHVATLRQARGTRYPDPVKAALDAEEAGADGITVHLREDRRHIQERDVVLLKDVLQTRMNFEMGVTEEMMAFAEKIRPAHICLVPETRQELTTEGGLDVAGQEARIKAAVERLSRTGAEVSLFIDADERQIEASRRVGAPAIELHTGRYADAQTPTEVAEELKRIVDGVAFGVAQGLIVNAGHGLHYHNVEAVAAIKGINELNIGHALVAHALFVGFKAAVAEMKALIVAASR</sequence>
<proteinExistence type="inferred from homology"/>
<dbReference type="EC" id="2.6.99.2" evidence="1"/>
<dbReference type="EMBL" id="CP000949">
    <property type="protein sequence ID" value="ACA71581.1"/>
    <property type="molecule type" value="Genomic_DNA"/>
</dbReference>
<dbReference type="SMR" id="B1J4E3"/>
<dbReference type="STRING" id="390235.PputW619_1076"/>
<dbReference type="KEGG" id="ppw:PputW619_1076"/>
<dbReference type="eggNOG" id="COG0854">
    <property type="taxonomic scope" value="Bacteria"/>
</dbReference>
<dbReference type="HOGENOM" id="CLU_074563_0_0_6"/>
<dbReference type="OrthoDB" id="9806590at2"/>
<dbReference type="UniPathway" id="UPA00244">
    <property type="reaction ID" value="UER00313"/>
</dbReference>
<dbReference type="GO" id="GO:0005829">
    <property type="term" value="C:cytosol"/>
    <property type="evidence" value="ECO:0007669"/>
    <property type="project" value="TreeGrafter"/>
</dbReference>
<dbReference type="GO" id="GO:0033856">
    <property type="term" value="F:pyridoxine 5'-phosphate synthase activity"/>
    <property type="evidence" value="ECO:0007669"/>
    <property type="project" value="UniProtKB-EC"/>
</dbReference>
<dbReference type="GO" id="GO:0008615">
    <property type="term" value="P:pyridoxine biosynthetic process"/>
    <property type="evidence" value="ECO:0007669"/>
    <property type="project" value="UniProtKB-UniRule"/>
</dbReference>
<dbReference type="CDD" id="cd00003">
    <property type="entry name" value="PNPsynthase"/>
    <property type="match status" value="1"/>
</dbReference>
<dbReference type="FunFam" id="3.20.20.70:FF:000042">
    <property type="entry name" value="Pyridoxine 5'-phosphate synthase"/>
    <property type="match status" value="1"/>
</dbReference>
<dbReference type="Gene3D" id="3.20.20.70">
    <property type="entry name" value="Aldolase class I"/>
    <property type="match status" value="1"/>
</dbReference>
<dbReference type="HAMAP" id="MF_00279">
    <property type="entry name" value="PdxJ"/>
    <property type="match status" value="1"/>
</dbReference>
<dbReference type="InterPro" id="IPR013785">
    <property type="entry name" value="Aldolase_TIM"/>
</dbReference>
<dbReference type="InterPro" id="IPR004569">
    <property type="entry name" value="PyrdxlP_synth_PdxJ"/>
</dbReference>
<dbReference type="InterPro" id="IPR036130">
    <property type="entry name" value="Pyridoxine-5'_phos_synth"/>
</dbReference>
<dbReference type="NCBIfam" id="TIGR00559">
    <property type="entry name" value="pdxJ"/>
    <property type="match status" value="1"/>
</dbReference>
<dbReference type="NCBIfam" id="NF003623">
    <property type="entry name" value="PRK05265.1-1"/>
    <property type="match status" value="1"/>
</dbReference>
<dbReference type="NCBIfam" id="NF003625">
    <property type="entry name" value="PRK05265.1-3"/>
    <property type="match status" value="1"/>
</dbReference>
<dbReference type="NCBIfam" id="NF003627">
    <property type="entry name" value="PRK05265.1-5"/>
    <property type="match status" value="1"/>
</dbReference>
<dbReference type="PANTHER" id="PTHR30456">
    <property type="entry name" value="PYRIDOXINE 5'-PHOSPHATE SYNTHASE"/>
    <property type="match status" value="1"/>
</dbReference>
<dbReference type="PANTHER" id="PTHR30456:SF0">
    <property type="entry name" value="PYRIDOXINE 5'-PHOSPHATE SYNTHASE"/>
    <property type="match status" value="1"/>
</dbReference>
<dbReference type="Pfam" id="PF03740">
    <property type="entry name" value="PdxJ"/>
    <property type="match status" value="1"/>
</dbReference>
<dbReference type="SUPFAM" id="SSF63892">
    <property type="entry name" value="Pyridoxine 5'-phosphate synthase"/>
    <property type="match status" value="1"/>
</dbReference>
<protein>
    <recommendedName>
        <fullName evidence="1">Pyridoxine 5'-phosphate synthase</fullName>
        <shortName evidence="1">PNP synthase</shortName>
        <ecNumber evidence="1">2.6.99.2</ecNumber>
    </recommendedName>
</protein>
<organism>
    <name type="scientific">Pseudomonas putida (strain W619)</name>
    <dbReference type="NCBI Taxonomy" id="390235"/>
    <lineage>
        <taxon>Bacteria</taxon>
        <taxon>Pseudomonadati</taxon>
        <taxon>Pseudomonadota</taxon>
        <taxon>Gammaproteobacteria</taxon>
        <taxon>Pseudomonadales</taxon>
        <taxon>Pseudomonadaceae</taxon>
        <taxon>Pseudomonas</taxon>
    </lineage>
</organism>
<keyword id="KW-0963">Cytoplasm</keyword>
<keyword id="KW-0664">Pyridoxine biosynthesis</keyword>
<keyword id="KW-0808">Transferase</keyword>
<name>PDXJ_PSEPW</name>